<accession>P23139</accession>
<proteinExistence type="inferred from homology"/>
<keyword id="KW-0328">Glycosyltransferase</keyword>
<keyword id="KW-0808">Transferase</keyword>
<organism>
    <name type="scientific">Rhodospirillum rubrum</name>
    <dbReference type="NCBI Taxonomy" id="1085"/>
    <lineage>
        <taxon>Bacteria</taxon>
        <taxon>Pseudomonadati</taxon>
        <taxon>Pseudomonadota</taxon>
        <taxon>Alphaproteobacteria</taxon>
        <taxon>Rhodospirillales</taxon>
        <taxon>Rhodospirillaceae</taxon>
        <taxon>Rhodospirillum</taxon>
    </lineage>
</organism>
<dbReference type="EMBL" id="X55387">
    <property type="protein sequence ID" value="CAA39061.1"/>
    <property type="molecule type" value="Genomic_DNA"/>
</dbReference>
<dbReference type="PIR" id="S12259">
    <property type="entry name" value="S12259"/>
</dbReference>
<dbReference type="SMR" id="P23139"/>
<dbReference type="GO" id="GO:0005829">
    <property type="term" value="C:cytosol"/>
    <property type="evidence" value="ECO:0007669"/>
    <property type="project" value="TreeGrafter"/>
</dbReference>
<dbReference type="GO" id="GO:0017061">
    <property type="term" value="F:S-methyl-5-thioadenosine phosphorylase activity"/>
    <property type="evidence" value="ECO:0007669"/>
    <property type="project" value="InterPro"/>
</dbReference>
<dbReference type="GO" id="GO:0019509">
    <property type="term" value="P:L-methionine salvage from methylthioadenosine"/>
    <property type="evidence" value="ECO:0007669"/>
    <property type="project" value="TreeGrafter"/>
</dbReference>
<dbReference type="GO" id="GO:0009116">
    <property type="term" value="P:nucleoside metabolic process"/>
    <property type="evidence" value="ECO:0007669"/>
    <property type="project" value="InterPro"/>
</dbReference>
<dbReference type="CDD" id="cd09010">
    <property type="entry name" value="MTAP_SsMTAPII_like_MTIP"/>
    <property type="match status" value="1"/>
</dbReference>
<dbReference type="Gene3D" id="3.40.50.1580">
    <property type="entry name" value="Nucleoside phosphorylase domain"/>
    <property type="match status" value="1"/>
</dbReference>
<dbReference type="InterPro" id="IPR010044">
    <property type="entry name" value="MTAP"/>
</dbReference>
<dbReference type="InterPro" id="IPR000845">
    <property type="entry name" value="Nucleoside_phosphorylase_d"/>
</dbReference>
<dbReference type="InterPro" id="IPR035994">
    <property type="entry name" value="Nucleoside_phosphorylase_sf"/>
</dbReference>
<dbReference type="InterPro" id="IPR018099">
    <property type="entry name" value="Purine_phosphorylase-2_CS"/>
</dbReference>
<dbReference type="PANTHER" id="PTHR42679">
    <property type="entry name" value="S-METHYL-5'-THIOADENOSINE PHOSPHORYLASE"/>
    <property type="match status" value="1"/>
</dbReference>
<dbReference type="PANTHER" id="PTHR42679:SF2">
    <property type="entry name" value="S-METHYL-5'-THIOADENOSINE PHOSPHORYLASE"/>
    <property type="match status" value="1"/>
</dbReference>
<dbReference type="Pfam" id="PF01048">
    <property type="entry name" value="PNP_UDP_1"/>
    <property type="match status" value="1"/>
</dbReference>
<dbReference type="SUPFAM" id="SSF53167">
    <property type="entry name" value="Purine and uridine phosphorylases"/>
    <property type="match status" value="1"/>
</dbReference>
<dbReference type="PROSITE" id="PS01240">
    <property type="entry name" value="PNP_MTAP_2"/>
    <property type="match status" value="1"/>
</dbReference>
<comment type="similarity">
    <text evidence="2">Belongs to the PNP/MTAP phosphorylase family.</text>
</comment>
<reference key="1">
    <citation type="journal article" date="1990" name="Mol. Gen. Genet.">
        <title>The pet genes of Rhodospirillum rubrum: cloning and sequencing of the genes for the cytochrome bc1-complex.</title>
        <authorList>
            <person name="Majewski C."/>
            <person name="Trebst A."/>
        </authorList>
    </citation>
    <scope>NUCLEOTIDE SEQUENCE [GENOMIC DNA]</scope>
    <source>
        <strain>FR1</strain>
    </source>
</reference>
<evidence type="ECO:0000256" key="1">
    <source>
        <dbReference type="SAM" id="MobiDB-lite"/>
    </source>
</evidence>
<evidence type="ECO:0000305" key="2"/>
<sequence>MSEAYRQPVLGVIGGSGVYDIDGLEGARWQTVESPFGDVSDQILRGTLDGLEMAFLPRHGRGHVLAPSDVNYRANIDALKRAGVTEILSVSAVGSLAEDLPPGTFVIADQFIDRTFAREKSFFRQGSGRPCQHGPSGQRLAGRSRRRGSGRSGHSPSPGRHLSVHGGAAVLDPGRKQSLSAMGLPRHRHDQHARGQAGPRSRDRLLHRGHGHRFRLLAPRSRPRQRRGGGSRAAAKRR</sequence>
<feature type="chain" id="PRO_0000184558" description="Uncharacterized 25.8 kDa protein in petC 3'region">
    <location>
        <begin position="1"/>
        <end position="238"/>
    </location>
</feature>
<feature type="region of interest" description="Disordered" evidence="1">
    <location>
        <begin position="123"/>
        <end position="167"/>
    </location>
</feature>
<feature type="region of interest" description="Disordered" evidence="1">
    <location>
        <begin position="180"/>
        <end position="238"/>
    </location>
</feature>
<feature type="compositionally biased region" description="Low complexity" evidence="1">
    <location>
        <begin position="152"/>
        <end position="161"/>
    </location>
</feature>
<feature type="compositionally biased region" description="Basic residues" evidence="1">
    <location>
        <begin position="207"/>
        <end position="238"/>
    </location>
</feature>
<name>YPE2_RHORU</name>
<protein>
    <recommendedName>
        <fullName>Uncharacterized 25.8 kDa protein in petC 3'region</fullName>
    </recommendedName>
</protein>